<accession>Q95KD7</accession>
<accession>Q95JP7</accession>
<accession>Q95LX1</accession>
<feature type="chain" id="PRO_0000309222" description="Coiled-coil domain-containing protein 191">
    <location>
        <begin position="1"/>
        <end position="935"/>
    </location>
</feature>
<feature type="region of interest" description="Disordered" evidence="2">
    <location>
        <begin position="596"/>
        <end position="661"/>
    </location>
</feature>
<feature type="region of interest" description="Disordered" evidence="2">
    <location>
        <begin position="678"/>
        <end position="715"/>
    </location>
</feature>
<feature type="coiled-coil region" evidence="1">
    <location>
        <begin position="189"/>
        <end position="324"/>
    </location>
</feature>
<feature type="coiled-coil region" evidence="1">
    <location>
        <begin position="366"/>
        <end position="438"/>
    </location>
</feature>
<feature type="coiled-coil region" evidence="1">
    <location>
        <begin position="554"/>
        <end position="589"/>
    </location>
</feature>
<feature type="coiled-coil region" evidence="1">
    <location>
        <begin position="660"/>
        <end position="740"/>
    </location>
</feature>
<feature type="splice variant" id="VSP_029097" description="In isoform 2." evidence="3">
    <location>
        <begin position="246"/>
        <end position="611"/>
    </location>
</feature>
<feature type="sequence conflict" description="In Ref. 1; BAB64463." evidence="4" ref="1">
    <original>I</original>
    <variation>T</variation>
    <location>
        <position position="318"/>
    </location>
</feature>
<comment type="alternative products">
    <event type="alternative splicing"/>
    <isoform>
        <id>Q95KD7-1</id>
        <name>1</name>
        <sequence type="displayed"/>
    </isoform>
    <isoform>
        <id>Q95KD7-2</id>
        <name>2</name>
        <sequence type="described" ref="VSP_029097"/>
    </isoform>
</comment>
<comment type="sequence caution" evidence="4">
    <conflict type="frameshift">
        <sequence resource="EMBL-CDS" id="BAB64463"/>
    </conflict>
</comment>
<comment type="sequence caution" evidence="4">
    <conflict type="miscellaneous discrepancy">
        <sequence resource="EMBL-CDS" id="BAB64463"/>
    </conflict>
    <text>Contaminating sequence. Potential poly-A sequence.</text>
</comment>
<name>CC191_MACFA</name>
<gene>
    <name type="primary">CCDC191</name>
    <name type="ORF">QflA-14927</name>
    <name type="ORF">QtsA-14717</name>
    <name type="ORF">QtsA-16413</name>
</gene>
<sequence>MLMAPQGRSSSKKRMGLNRWKRFTRKPSPQHAFGPDNVEHWIKRVEKASEFAVSNAFFTRNSDLPRSPWGQITDWKTSEQIEDHDEIYAEAQELVNDWLDSKLKQELASDEEGDAKNTVSSVSLVPEANDHLKYDKFDDLCGYLEEEEESTTVQKFIDHLLHKNVVDSAVMEDLGRKENQDKKQQKDPRLTMEMRHKQVKENRLRREKELEYQRIQKTLKKSAFLEAQCLVQEEKKRKALEAKKEEEEIQREMVKLRREIIERRRTVKEAWKIEKKRQEENSQNSSEKLMFQSTHILLDEEKMAKERKRKLKELLIQIFKENQQCQKRYFSAWHKLILDHRIKLGKAGTLSDWKIQLKVLRAWRDYTRSQKLQRETQALENDLREENRKQQLAAEHNRKQVLRHCFTEWQHWCGAELLKRELALTKEENRKKMDALLKAASLGKLSASESSGISLPEEATAVVGPPVRNGQVTAVPPLWEKPPLGSSDCMLSPPLGRTTGNLQGSLQNVPLSAPGNKQHKTLGVEPPQLPGSNETLRTTSQKAEPLCLGHFHSRHVFQQQLIEKQKKKLQEQQKTILELKKNQRLAEAQWAAEHASAVTDTQSHLLSKPRGEEEPRTCQMLVNSPVASPGTEGSRSDSRNCLSGRKRKPKQLMTPHPILKAMEERAIQRAERRRILAEKKKKQEEEKLAQLKAQEEERQKREAEEKEAQLERKREEKRLKKMKELEKQKRIKRNQQLEAIAKEHYEGVLLRKKGLEPWKILRMQSKQNVQVAEEHYCLFLQRKYLLTWFQCSQESLARKMAQADQFYSQILLKRVIRSWLQYMTDLQEEVRKFCVRFLQKKIFRAWFNMVREVKIDSRGKHEIAAEHSDRRILWITFRTWKKFVKFMKEERVKEERRQQLRRKVVEILPDFQVPGSDHELYQQSDTWSLSKTSLL</sequence>
<organism>
    <name type="scientific">Macaca fascicularis</name>
    <name type="common">Crab-eating macaque</name>
    <name type="synonym">Cynomolgus monkey</name>
    <dbReference type="NCBI Taxonomy" id="9541"/>
    <lineage>
        <taxon>Eukaryota</taxon>
        <taxon>Metazoa</taxon>
        <taxon>Chordata</taxon>
        <taxon>Craniata</taxon>
        <taxon>Vertebrata</taxon>
        <taxon>Euteleostomi</taxon>
        <taxon>Mammalia</taxon>
        <taxon>Eutheria</taxon>
        <taxon>Euarchontoglires</taxon>
        <taxon>Primates</taxon>
        <taxon>Haplorrhini</taxon>
        <taxon>Catarrhini</taxon>
        <taxon>Cercopithecidae</taxon>
        <taxon>Cercopithecinae</taxon>
        <taxon>Macaca</taxon>
    </lineage>
</organism>
<reference key="1">
    <citation type="journal article" date="2002" name="BMC Genomics">
        <title>Cynomolgus monkey testicular cDNAs for discovery of novel human genes in the human genome sequence.</title>
        <authorList>
            <person name="Osada N."/>
            <person name="Hida M."/>
            <person name="Kusuda J."/>
            <person name="Tanuma R."/>
            <person name="Hirata M."/>
            <person name="Suto Y."/>
            <person name="Hirai M."/>
            <person name="Terao K."/>
            <person name="Sugano S."/>
            <person name="Hashimoto K."/>
        </authorList>
    </citation>
    <scope>NUCLEOTIDE SEQUENCE [LARGE SCALE MRNA] (ISOFORMS 1 AND 2)</scope>
    <source>
        <tissue>Frontal cortex</tissue>
        <tissue>Testis</tissue>
    </source>
</reference>
<evidence type="ECO:0000255" key="1"/>
<evidence type="ECO:0000256" key="2">
    <source>
        <dbReference type="SAM" id="MobiDB-lite"/>
    </source>
</evidence>
<evidence type="ECO:0000303" key="3">
    <source>
    </source>
</evidence>
<evidence type="ECO:0000305" key="4"/>
<protein>
    <recommendedName>
        <fullName>Coiled-coil domain-containing protein 191</fullName>
    </recommendedName>
</protein>
<dbReference type="EMBL" id="AB062941">
    <property type="protein sequence ID" value="BAB60732.1"/>
    <property type="molecule type" value="mRNA"/>
</dbReference>
<dbReference type="EMBL" id="AB070134">
    <property type="protein sequence ID" value="BAB63079.1"/>
    <property type="molecule type" value="mRNA"/>
</dbReference>
<dbReference type="EMBL" id="AB071070">
    <property type="protein sequence ID" value="BAB64463.1"/>
    <property type="status" value="ALT_SEQ"/>
    <property type="molecule type" value="mRNA"/>
</dbReference>
<dbReference type="RefSeq" id="NP_001270951.1">
    <property type="nucleotide sequence ID" value="NM_001284022.1"/>
</dbReference>
<dbReference type="SMR" id="Q95KD7"/>
<dbReference type="eggNOG" id="ENOG502QS57">
    <property type="taxonomic scope" value="Eukaryota"/>
</dbReference>
<dbReference type="Proteomes" id="UP000233100">
    <property type="component" value="Unplaced"/>
</dbReference>
<dbReference type="InterPro" id="IPR052270">
    <property type="entry name" value="CACF_protein"/>
</dbReference>
<dbReference type="PANTHER" id="PTHR22028:SF5">
    <property type="entry name" value="COILED-COIL DOMAIN-CONTAINING PROTEIN 191"/>
    <property type="match status" value="1"/>
</dbReference>
<dbReference type="PANTHER" id="PTHR22028">
    <property type="entry name" value="SFI1 SPINDLE BODY DOMAIN-CONTAINING PROTEIN-RELATED"/>
    <property type="match status" value="1"/>
</dbReference>
<keyword id="KW-0025">Alternative splicing</keyword>
<keyword id="KW-0175">Coiled coil</keyword>
<keyword id="KW-1185">Reference proteome</keyword>
<proteinExistence type="evidence at transcript level"/>